<sequence length="333" mass="35230">MIITDTPIDTLAGSILDGASISSEQALALTALSGASLQSLFAAASRVREHHFGNQVSLCGIINAKSGLCPEDCAFCAQSSHHATGVACYPLLDQDTLLAGARSVAGHGAACYGIVTSGSGISEGDELEQVCAAIRAIRAEGRIAPGASLGTLTKTAAEQLKAAGLVTYHHNLETSRSFFPQICSTHDYDDDVATVQLAKQVGLRVCCGGLFGLGETMAQRVELALTLRELQVDSVPINFLDPVPGTPLAVMQQLTSLDCLHTIALYRLILPDVHITICGGRQRNLRELQSWVFLAGASGIMTGNYLTKEGRQPADDLRMIEDLGLVIAKEMLR</sequence>
<comment type="function">
    <text evidence="1">Catalyzes the conversion of dethiobiotin (DTB) to biotin by the insertion of a sulfur atom into dethiobiotin via a radical-based mechanism.</text>
</comment>
<comment type="catalytic activity">
    <reaction evidence="1">
        <text>(4R,5S)-dethiobiotin + (sulfur carrier)-SH + 2 reduced [2Fe-2S]-[ferredoxin] + 2 S-adenosyl-L-methionine = (sulfur carrier)-H + biotin + 2 5'-deoxyadenosine + 2 L-methionine + 2 oxidized [2Fe-2S]-[ferredoxin]</text>
        <dbReference type="Rhea" id="RHEA:22060"/>
        <dbReference type="Rhea" id="RHEA-COMP:10000"/>
        <dbReference type="Rhea" id="RHEA-COMP:10001"/>
        <dbReference type="Rhea" id="RHEA-COMP:14737"/>
        <dbReference type="Rhea" id="RHEA-COMP:14739"/>
        <dbReference type="ChEBI" id="CHEBI:17319"/>
        <dbReference type="ChEBI" id="CHEBI:29917"/>
        <dbReference type="ChEBI" id="CHEBI:33737"/>
        <dbReference type="ChEBI" id="CHEBI:33738"/>
        <dbReference type="ChEBI" id="CHEBI:57586"/>
        <dbReference type="ChEBI" id="CHEBI:57844"/>
        <dbReference type="ChEBI" id="CHEBI:59789"/>
        <dbReference type="ChEBI" id="CHEBI:64428"/>
        <dbReference type="ChEBI" id="CHEBI:149473"/>
        <dbReference type="EC" id="2.8.1.6"/>
    </reaction>
</comment>
<comment type="cofactor">
    <cofactor evidence="1">
        <name>[4Fe-4S] cluster</name>
        <dbReference type="ChEBI" id="CHEBI:49883"/>
    </cofactor>
    <text evidence="1">Binds 1 [4Fe-4S] cluster. The cluster is coordinated with 3 cysteines and an exchangeable S-adenosyl-L-methionine.</text>
</comment>
<comment type="cofactor">
    <cofactor evidence="1">
        <name>[2Fe-2S] cluster</name>
        <dbReference type="ChEBI" id="CHEBI:190135"/>
    </cofactor>
    <text evidence="1">Binds 1 [2Fe-2S] cluster. The cluster is coordinated with 3 cysteines and 1 arginine.</text>
</comment>
<comment type="pathway">
    <text evidence="1">Cofactor biosynthesis; biotin biosynthesis; biotin from 7,8-diaminononanoate: step 2/2.</text>
</comment>
<comment type="subunit">
    <text evidence="1">Homodimer.</text>
</comment>
<comment type="similarity">
    <text evidence="1">Belongs to the radical SAM superfamily. Biotin synthase family.</text>
</comment>
<accession>B3E599</accession>
<protein>
    <recommendedName>
        <fullName evidence="1">Biotin synthase</fullName>
        <ecNumber evidence="1">2.8.1.6</ecNumber>
    </recommendedName>
</protein>
<organism>
    <name type="scientific">Trichlorobacter lovleyi (strain ATCC BAA-1151 / DSM 17278 / SZ)</name>
    <name type="common">Geobacter lovleyi</name>
    <dbReference type="NCBI Taxonomy" id="398767"/>
    <lineage>
        <taxon>Bacteria</taxon>
        <taxon>Pseudomonadati</taxon>
        <taxon>Thermodesulfobacteriota</taxon>
        <taxon>Desulfuromonadia</taxon>
        <taxon>Geobacterales</taxon>
        <taxon>Geobacteraceae</taxon>
        <taxon>Trichlorobacter</taxon>
    </lineage>
</organism>
<dbReference type="EC" id="2.8.1.6" evidence="1"/>
<dbReference type="EMBL" id="CP001089">
    <property type="protein sequence ID" value="ACD96086.1"/>
    <property type="molecule type" value="Genomic_DNA"/>
</dbReference>
<dbReference type="RefSeq" id="WP_012470419.1">
    <property type="nucleotide sequence ID" value="NC_010814.1"/>
</dbReference>
<dbReference type="SMR" id="B3E599"/>
<dbReference type="STRING" id="398767.Glov_2370"/>
<dbReference type="KEGG" id="glo:Glov_2370"/>
<dbReference type="eggNOG" id="COG0502">
    <property type="taxonomic scope" value="Bacteria"/>
</dbReference>
<dbReference type="HOGENOM" id="CLU_033172_2_1_7"/>
<dbReference type="OrthoDB" id="9786826at2"/>
<dbReference type="UniPathway" id="UPA00078">
    <property type="reaction ID" value="UER00162"/>
</dbReference>
<dbReference type="Proteomes" id="UP000002420">
    <property type="component" value="Chromosome"/>
</dbReference>
<dbReference type="GO" id="GO:0051537">
    <property type="term" value="F:2 iron, 2 sulfur cluster binding"/>
    <property type="evidence" value="ECO:0007669"/>
    <property type="project" value="UniProtKB-KW"/>
</dbReference>
<dbReference type="GO" id="GO:0051539">
    <property type="term" value="F:4 iron, 4 sulfur cluster binding"/>
    <property type="evidence" value="ECO:0007669"/>
    <property type="project" value="UniProtKB-KW"/>
</dbReference>
<dbReference type="GO" id="GO:0004076">
    <property type="term" value="F:biotin synthase activity"/>
    <property type="evidence" value="ECO:0007669"/>
    <property type="project" value="UniProtKB-UniRule"/>
</dbReference>
<dbReference type="GO" id="GO:0005506">
    <property type="term" value="F:iron ion binding"/>
    <property type="evidence" value="ECO:0007669"/>
    <property type="project" value="UniProtKB-UniRule"/>
</dbReference>
<dbReference type="GO" id="GO:0009102">
    <property type="term" value="P:biotin biosynthetic process"/>
    <property type="evidence" value="ECO:0007669"/>
    <property type="project" value="UniProtKB-UniRule"/>
</dbReference>
<dbReference type="CDD" id="cd01335">
    <property type="entry name" value="Radical_SAM"/>
    <property type="match status" value="1"/>
</dbReference>
<dbReference type="FunFam" id="3.20.20.70:FF:000026">
    <property type="entry name" value="Biotin synthase"/>
    <property type="match status" value="1"/>
</dbReference>
<dbReference type="Gene3D" id="3.20.20.70">
    <property type="entry name" value="Aldolase class I"/>
    <property type="match status" value="1"/>
</dbReference>
<dbReference type="HAMAP" id="MF_01694">
    <property type="entry name" value="BioB"/>
    <property type="match status" value="1"/>
</dbReference>
<dbReference type="InterPro" id="IPR013785">
    <property type="entry name" value="Aldolase_TIM"/>
</dbReference>
<dbReference type="InterPro" id="IPR010722">
    <property type="entry name" value="BATS_dom"/>
</dbReference>
<dbReference type="InterPro" id="IPR002684">
    <property type="entry name" value="Biotin_synth/BioAB"/>
</dbReference>
<dbReference type="InterPro" id="IPR024177">
    <property type="entry name" value="Biotin_synthase"/>
</dbReference>
<dbReference type="InterPro" id="IPR006638">
    <property type="entry name" value="Elp3/MiaA/NifB-like_rSAM"/>
</dbReference>
<dbReference type="InterPro" id="IPR007197">
    <property type="entry name" value="rSAM"/>
</dbReference>
<dbReference type="NCBIfam" id="TIGR00433">
    <property type="entry name" value="bioB"/>
    <property type="match status" value="1"/>
</dbReference>
<dbReference type="PANTHER" id="PTHR22976">
    <property type="entry name" value="BIOTIN SYNTHASE"/>
    <property type="match status" value="1"/>
</dbReference>
<dbReference type="PANTHER" id="PTHR22976:SF2">
    <property type="entry name" value="BIOTIN SYNTHASE, MITOCHONDRIAL"/>
    <property type="match status" value="1"/>
</dbReference>
<dbReference type="Pfam" id="PF06968">
    <property type="entry name" value="BATS"/>
    <property type="match status" value="1"/>
</dbReference>
<dbReference type="Pfam" id="PF04055">
    <property type="entry name" value="Radical_SAM"/>
    <property type="match status" value="1"/>
</dbReference>
<dbReference type="PIRSF" id="PIRSF001619">
    <property type="entry name" value="Biotin_synth"/>
    <property type="match status" value="1"/>
</dbReference>
<dbReference type="SFLD" id="SFLDG01060">
    <property type="entry name" value="BATS_domain_containing"/>
    <property type="match status" value="1"/>
</dbReference>
<dbReference type="SFLD" id="SFLDG01278">
    <property type="entry name" value="biotin_synthase_like"/>
    <property type="match status" value="1"/>
</dbReference>
<dbReference type="SMART" id="SM00876">
    <property type="entry name" value="BATS"/>
    <property type="match status" value="1"/>
</dbReference>
<dbReference type="SMART" id="SM00729">
    <property type="entry name" value="Elp3"/>
    <property type="match status" value="1"/>
</dbReference>
<dbReference type="SUPFAM" id="SSF102114">
    <property type="entry name" value="Radical SAM enzymes"/>
    <property type="match status" value="1"/>
</dbReference>
<dbReference type="PROSITE" id="PS51918">
    <property type="entry name" value="RADICAL_SAM"/>
    <property type="match status" value="1"/>
</dbReference>
<gene>
    <name evidence="1" type="primary">bioB</name>
    <name type="ordered locus">Glov_2370</name>
</gene>
<reference key="1">
    <citation type="submission" date="2008-05" db="EMBL/GenBank/DDBJ databases">
        <title>Complete sequence of chromosome of Geobacter lovleyi SZ.</title>
        <authorList>
            <consortium name="US DOE Joint Genome Institute"/>
            <person name="Lucas S."/>
            <person name="Copeland A."/>
            <person name="Lapidus A."/>
            <person name="Glavina del Rio T."/>
            <person name="Dalin E."/>
            <person name="Tice H."/>
            <person name="Bruce D."/>
            <person name="Goodwin L."/>
            <person name="Pitluck S."/>
            <person name="Chertkov O."/>
            <person name="Meincke L."/>
            <person name="Brettin T."/>
            <person name="Detter J.C."/>
            <person name="Han C."/>
            <person name="Tapia R."/>
            <person name="Kuske C.R."/>
            <person name="Schmutz J."/>
            <person name="Larimer F."/>
            <person name="Land M."/>
            <person name="Hauser L."/>
            <person name="Kyrpides N."/>
            <person name="Mikhailova N."/>
            <person name="Sung Y."/>
            <person name="Fletcher K.E."/>
            <person name="Ritalahti K.M."/>
            <person name="Loeffler F.E."/>
            <person name="Richardson P."/>
        </authorList>
    </citation>
    <scope>NUCLEOTIDE SEQUENCE [LARGE SCALE GENOMIC DNA]</scope>
    <source>
        <strain>ATCC BAA-1151 / DSM 17278 / SZ</strain>
    </source>
</reference>
<name>BIOB_TRIL1</name>
<proteinExistence type="inferred from homology"/>
<feature type="chain" id="PRO_0000381402" description="Biotin synthase">
    <location>
        <begin position="1"/>
        <end position="333"/>
    </location>
</feature>
<feature type="domain" description="Radical SAM core" evidence="2">
    <location>
        <begin position="51"/>
        <end position="281"/>
    </location>
</feature>
<feature type="binding site" evidence="1">
    <location>
        <position position="69"/>
    </location>
    <ligand>
        <name>[4Fe-4S] cluster</name>
        <dbReference type="ChEBI" id="CHEBI:49883"/>
        <note>4Fe-4S-S-AdoMet</note>
    </ligand>
</feature>
<feature type="binding site" evidence="1">
    <location>
        <position position="73"/>
    </location>
    <ligand>
        <name>[4Fe-4S] cluster</name>
        <dbReference type="ChEBI" id="CHEBI:49883"/>
        <note>4Fe-4S-S-AdoMet</note>
    </ligand>
</feature>
<feature type="binding site" evidence="1">
    <location>
        <position position="76"/>
    </location>
    <ligand>
        <name>[4Fe-4S] cluster</name>
        <dbReference type="ChEBI" id="CHEBI:49883"/>
        <note>4Fe-4S-S-AdoMet</note>
    </ligand>
</feature>
<feature type="binding site" evidence="1">
    <location>
        <position position="206"/>
    </location>
    <ligand>
        <name>[2Fe-2S] cluster</name>
        <dbReference type="ChEBI" id="CHEBI:190135"/>
    </ligand>
</feature>
<evidence type="ECO:0000255" key="1">
    <source>
        <dbReference type="HAMAP-Rule" id="MF_01694"/>
    </source>
</evidence>
<evidence type="ECO:0000255" key="2">
    <source>
        <dbReference type="PROSITE-ProRule" id="PRU01266"/>
    </source>
</evidence>
<keyword id="KW-0001">2Fe-2S</keyword>
<keyword id="KW-0004">4Fe-4S</keyword>
<keyword id="KW-0093">Biotin biosynthesis</keyword>
<keyword id="KW-0408">Iron</keyword>
<keyword id="KW-0411">Iron-sulfur</keyword>
<keyword id="KW-0479">Metal-binding</keyword>
<keyword id="KW-1185">Reference proteome</keyword>
<keyword id="KW-0949">S-adenosyl-L-methionine</keyword>
<keyword id="KW-0808">Transferase</keyword>